<reference evidence="8 10" key="1">
    <citation type="submission" date="2005-09" db="EMBL/GenBank/DDBJ databases">
        <authorList>
            <person name="Mural R.J."/>
            <person name="Adams M.D."/>
            <person name="Myers E.W."/>
            <person name="Smith H.O."/>
            <person name="Venter J.C."/>
        </authorList>
    </citation>
    <scope>NUCLEOTIDE SEQUENCE [LARGE SCALE GENOMIC DNA]</scope>
</reference>
<reference evidence="9" key="2">
    <citation type="journal article" date="2004" name="Genome Res.">
        <title>The status, quality, and expansion of the NIH full-length cDNA project: the Mammalian Gene Collection (MGC).</title>
        <authorList>
            <consortium name="The MGC Project Team"/>
        </authorList>
    </citation>
    <scope>NUCLEOTIDE SEQUENCE [LARGE SCALE MRNA]</scope>
    <source>
        <strain evidence="7">Brown Norway</strain>
        <tissue evidence="9">Kidney</tissue>
    </source>
</reference>
<reference evidence="8 10" key="3">
    <citation type="submission" date="2009-01" db="UniProtKB">
        <authorList>
            <person name="Maurya D.K."/>
            <person name="Bhargava P."/>
        </authorList>
    </citation>
    <scope>IDENTIFICATION BY MASS SPECTROMETRY</scope>
</reference>
<reference key="4">
    <citation type="journal article" date="2012" name="Nat. Commun.">
        <title>Quantitative maps of protein phosphorylation sites across 14 different rat organs and tissues.</title>
        <authorList>
            <person name="Lundby A."/>
            <person name="Secher A."/>
            <person name="Lage K."/>
            <person name="Nordsborg N.B."/>
            <person name="Dmytriyev A."/>
            <person name="Lundby C."/>
            <person name="Olsen J.V."/>
        </authorList>
    </citation>
    <scope>PHOSPHORYLATION [LARGE SCALE ANALYSIS] AT SER-46 AND SER-835</scope>
    <scope>IDENTIFICATION BY MASS SPECTROMETRY [LARGE SCALE ANALYSIS]</scope>
</reference>
<organism>
    <name type="scientific">Rattus norvegicus</name>
    <name type="common">Rat</name>
    <dbReference type="NCBI Taxonomy" id="10116"/>
    <lineage>
        <taxon>Eukaryota</taxon>
        <taxon>Metazoa</taxon>
        <taxon>Chordata</taxon>
        <taxon>Craniata</taxon>
        <taxon>Vertebrata</taxon>
        <taxon>Euteleostomi</taxon>
        <taxon>Mammalia</taxon>
        <taxon>Eutheria</taxon>
        <taxon>Euarchontoglires</taxon>
        <taxon>Glires</taxon>
        <taxon>Rodentia</taxon>
        <taxon>Myomorpha</taxon>
        <taxon>Muroidea</taxon>
        <taxon>Muridae</taxon>
        <taxon>Murinae</taxon>
        <taxon>Rattus</taxon>
    </lineage>
</organism>
<gene>
    <name evidence="9 11" type="primary">Uba1</name>
    <name evidence="3" type="synonym">Ube1</name>
</gene>
<evidence type="ECO:0000250" key="1">
    <source>
        <dbReference type="UniProtKB" id="P22314"/>
    </source>
</evidence>
<evidence type="ECO:0000250" key="2">
    <source>
        <dbReference type="UniProtKB" id="P22515"/>
    </source>
</evidence>
<evidence type="ECO:0000250" key="3">
    <source>
        <dbReference type="UniProtKB" id="Q02053"/>
    </source>
</evidence>
<evidence type="ECO:0000255" key="4"/>
<evidence type="ECO:0000255" key="5">
    <source>
        <dbReference type="PROSITE-ProRule" id="PRU10132"/>
    </source>
</evidence>
<evidence type="ECO:0000256" key="6">
    <source>
        <dbReference type="SAM" id="MobiDB-lite"/>
    </source>
</evidence>
<evidence type="ECO:0000269" key="7">
    <source>
    </source>
</evidence>
<evidence type="ECO:0000305" key="8"/>
<evidence type="ECO:0000312" key="9">
    <source>
        <dbReference type="EMBL" id="AAH85791.1"/>
    </source>
</evidence>
<evidence type="ECO:0000312" key="10">
    <source>
        <dbReference type="EMBL" id="EDL97701.1"/>
    </source>
</evidence>
<evidence type="ECO:0000312" key="11">
    <source>
        <dbReference type="RGD" id="1359327"/>
    </source>
</evidence>
<evidence type="ECO:0007744" key="12">
    <source>
    </source>
</evidence>
<protein>
    <recommendedName>
        <fullName evidence="3">Ubiquitin-like modifier-activating enzyme 1</fullName>
        <ecNumber evidence="1">6.2.1.45</ecNumber>
    </recommendedName>
    <alternativeName>
        <fullName evidence="3">Ubiquitin-activating enzyme E1</fullName>
    </alternativeName>
</protein>
<name>UBA1_RAT</name>
<feature type="initiator methionine" description="Removed" evidence="1">
    <location>
        <position position="1"/>
    </location>
</feature>
<feature type="chain" id="PRO_0000365096" description="Ubiquitin-like modifier-activating enzyme 1">
    <location>
        <begin position="2"/>
        <end position="1058"/>
    </location>
</feature>
<feature type="repeat" description="1-1" evidence="4">
    <location>
        <begin position="63"/>
        <end position="199"/>
    </location>
</feature>
<feature type="repeat" description="1-2" evidence="4">
    <location>
        <begin position="459"/>
        <end position="611"/>
    </location>
</feature>
<feature type="region of interest" description="Disordered" evidence="6">
    <location>
        <begin position="1"/>
        <end position="46"/>
    </location>
</feature>
<feature type="region of interest" description="2 approximate repeats" evidence="4">
    <location>
        <begin position="63"/>
        <end position="611"/>
    </location>
</feature>
<feature type="compositionally biased region" description="Low complexity" evidence="6">
    <location>
        <begin position="24"/>
        <end position="36"/>
    </location>
</feature>
<feature type="active site" description="Glycyl thioester intermediate" evidence="3 5">
    <location>
        <position position="632"/>
    </location>
</feature>
<feature type="binding site" evidence="2">
    <location>
        <position position="478"/>
    </location>
    <ligand>
        <name>ATP</name>
        <dbReference type="ChEBI" id="CHEBI:30616"/>
    </ligand>
</feature>
<feature type="binding site" evidence="2">
    <location>
        <position position="504"/>
    </location>
    <ligand>
        <name>ATP</name>
        <dbReference type="ChEBI" id="CHEBI:30616"/>
    </ligand>
</feature>
<feature type="binding site" evidence="2">
    <location>
        <position position="515"/>
    </location>
    <ligand>
        <name>ATP</name>
        <dbReference type="ChEBI" id="CHEBI:30616"/>
    </ligand>
</feature>
<feature type="binding site" evidence="2">
    <location>
        <position position="528"/>
    </location>
    <ligand>
        <name>ATP</name>
        <dbReference type="ChEBI" id="CHEBI:30616"/>
    </ligand>
</feature>
<feature type="binding site" evidence="2">
    <location>
        <begin position="576"/>
        <end position="577"/>
    </location>
    <ligand>
        <name>ATP</name>
        <dbReference type="ChEBI" id="CHEBI:30616"/>
    </ligand>
</feature>
<feature type="modified residue" description="N-acetylserine" evidence="1">
    <location>
        <position position="2"/>
    </location>
</feature>
<feature type="modified residue" description="Phosphoserine" evidence="1">
    <location>
        <position position="4"/>
    </location>
</feature>
<feature type="modified residue" description="Phosphoserine" evidence="1">
    <location>
        <position position="13"/>
    </location>
</feature>
<feature type="modified residue" description="Phosphoserine" evidence="3">
    <location>
        <position position="21"/>
    </location>
</feature>
<feature type="modified residue" description="Phosphoserine" evidence="3">
    <location>
        <position position="24"/>
    </location>
</feature>
<feature type="modified residue" description="Phosphoserine" evidence="12">
    <location>
        <position position="46"/>
    </location>
</feature>
<feature type="modified residue" description="Phosphotyrosine" evidence="3">
    <location>
        <position position="55"/>
    </location>
</feature>
<feature type="modified residue" description="N6-succinyllysine" evidence="3">
    <location>
        <position position="528"/>
    </location>
</feature>
<feature type="modified residue" description="N6-acetyllysine" evidence="1">
    <location>
        <position position="671"/>
    </location>
</feature>
<feature type="modified residue" description="Phosphothreonine" evidence="1">
    <location>
        <position position="800"/>
    </location>
</feature>
<feature type="modified residue" description="Phosphoserine" evidence="1">
    <location>
        <position position="810"/>
    </location>
</feature>
<feature type="modified residue" description="Phosphoserine" evidence="3">
    <location>
        <position position="816"/>
    </location>
</feature>
<feature type="modified residue" description="Phosphoserine" evidence="1">
    <location>
        <position position="820"/>
    </location>
</feature>
<feature type="modified residue" description="Phosphoserine" evidence="12">
    <location>
        <position position="835"/>
    </location>
</feature>
<feature type="modified residue" description="N6-acetyllysine" evidence="1">
    <location>
        <position position="980"/>
    </location>
</feature>
<dbReference type="EC" id="6.2.1.45" evidence="1"/>
<dbReference type="EMBL" id="CH474009">
    <property type="protein sequence ID" value="EDL97701.1"/>
    <property type="molecule type" value="Genomic_DNA"/>
</dbReference>
<dbReference type="EMBL" id="CH474009">
    <property type="protein sequence ID" value="EDL97702.1"/>
    <property type="molecule type" value="Genomic_DNA"/>
</dbReference>
<dbReference type="EMBL" id="BC085791">
    <property type="protein sequence ID" value="AAH85791.1"/>
    <property type="molecule type" value="mRNA"/>
</dbReference>
<dbReference type="RefSeq" id="NP_001014102.1">
    <property type="nucleotide sequence ID" value="NM_001014080.1"/>
</dbReference>
<dbReference type="RefSeq" id="XP_006256674.1">
    <property type="nucleotide sequence ID" value="XM_006256612.5"/>
</dbReference>
<dbReference type="RefSeq" id="XP_006256675.2">
    <property type="nucleotide sequence ID" value="XM_006256613.4"/>
</dbReference>
<dbReference type="RefSeq" id="XP_063136075.1">
    <property type="nucleotide sequence ID" value="XM_063280005.1"/>
</dbReference>
<dbReference type="BMRB" id="Q5U300"/>
<dbReference type="SMR" id="Q5U300"/>
<dbReference type="BioGRID" id="260716">
    <property type="interactions" value="4"/>
</dbReference>
<dbReference type="FunCoup" id="Q5U300">
    <property type="interactions" value="4501"/>
</dbReference>
<dbReference type="IntAct" id="Q5U300">
    <property type="interactions" value="1"/>
</dbReference>
<dbReference type="STRING" id="10116.ENSRNOP00000033950"/>
<dbReference type="GlyGen" id="Q5U300">
    <property type="glycosylation" value="1 site, 1 O-linked glycan (1 site)"/>
</dbReference>
<dbReference type="iPTMnet" id="Q5U300"/>
<dbReference type="PhosphoSitePlus" id="Q5U300"/>
<dbReference type="SwissPalm" id="Q5U300"/>
<dbReference type="jPOST" id="Q5U300"/>
<dbReference type="PaxDb" id="10116-ENSRNOP00000033950"/>
<dbReference type="GeneID" id="314432"/>
<dbReference type="KEGG" id="rno:314432"/>
<dbReference type="UCSC" id="RGD:1359327">
    <property type="organism name" value="rat"/>
</dbReference>
<dbReference type="AGR" id="RGD:1359327"/>
<dbReference type="CTD" id="7317"/>
<dbReference type="RGD" id="1359327">
    <property type="gene designation" value="Uba1"/>
</dbReference>
<dbReference type="VEuPathDB" id="HostDB:ENSRNOG00000019164"/>
<dbReference type="eggNOG" id="KOG2012">
    <property type="taxonomic scope" value="Eukaryota"/>
</dbReference>
<dbReference type="HOGENOM" id="CLU_002556_0_0_1"/>
<dbReference type="InParanoid" id="Q5U300"/>
<dbReference type="OrthoDB" id="10252231at2759"/>
<dbReference type="PhylomeDB" id="Q5U300"/>
<dbReference type="TreeFam" id="TF300586"/>
<dbReference type="Reactome" id="R-RNO-8866652">
    <property type="pathway name" value="Synthesis of active ubiquitin: roles of E1 and E2 enzymes"/>
</dbReference>
<dbReference type="Reactome" id="R-RNO-983168">
    <property type="pathway name" value="Antigen processing: Ubiquitination &amp; Proteasome degradation"/>
</dbReference>
<dbReference type="UniPathway" id="UPA00143"/>
<dbReference type="PRO" id="PR:Q5U300"/>
<dbReference type="Proteomes" id="UP000002494">
    <property type="component" value="Chromosome X"/>
</dbReference>
<dbReference type="Proteomes" id="UP000234681">
    <property type="component" value="Chromosome x"/>
</dbReference>
<dbReference type="Bgee" id="ENSRNOG00000019164">
    <property type="expression patterns" value="Expressed in spleen and 19 other cell types or tissues"/>
</dbReference>
<dbReference type="GO" id="GO:0005737">
    <property type="term" value="C:cytoplasm"/>
    <property type="evidence" value="ECO:0000250"/>
    <property type="project" value="UniProtKB"/>
</dbReference>
<dbReference type="GO" id="GO:0030057">
    <property type="term" value="C:desmosome"/>
    <property type="evidence" value="ECO:0000266"/>
    <property type="project" value="RGD"/>
</dbReference>
<dbReference type="GO" id="GO:0010008">
    <property type="term" value="C:endosome membrane"/>
    <property type="evidence" value="ECO:0000266"/>
    <property type="project" value="RGD"/>
</dbReference>
<dbReference type="GO" id="GO:0000792">
    <property type="term" value="C:heterochromatin"/>
    <property type="evidence" value="ECO:0000266"/>
    <property type="project" value="RGD"/>
</dbReference>
<dbReference type="GO" id="GO:0005765">
    <property type="term" value="C:lysosomal membrane"/>
    <property type="evidence" value="ECO:0000266"/>
    <property type="project" value="RGD"/>
</dbReference>
<dbReference type="GO" id="GO:0005739">
    <property type="term" value="C:mitochondrion"/>
    <property type="evidence" value="ECO:0000250"/>
    <property type="project" value="UniProtKB"/>
</dbReference>
<dbReference type="GO" id="GO:0005634">
    <property type="term" value="C:nucleus"/>
    <property type="evidence" value="ECO:0000250"/>
    <property type="project" value="UniProtKB"/>
</dbReference>
<dbReference type="GO" id="GO:0030867">
    <property type="term" value="C:rough endoplasmic reticulum membrane"/>
    <property type="evidence" value="ECO:0000266"/>
    <property type="project" value="RGD"/>
</dbReference>
<dbReference type="GO" id="GO:0005524">
    <property type="term" value="F:ATP binding"/>
    <property type="evidence" value="ECO:0007669"/>
    <property type="project" value="UniProtKB-KW"/>
</dbReference>
<dbReference type="GO" id="GO:0004839">
    <property type="term" value="F:ubiquitin activating enzyme activity"/>
    <property type="evidence" value="ECO:0000266"/>
    <property type="project" value="RGD"/>
</dbReference>
<dbReference type="GO" id="GO:0006974">
    <property type="term" value="P:DNA damage response"/>
    <property type="evidence" value="ECO:0000266"/>
    <property type="project" value="RGD"/>
</dbReference>
<dbReference type="GO" id="GO:0016567">
    <property type="term" value="P:protein ubiquitination"/>
    <property type="evidence" value="ECO:0000318"/>
    <property type="project" value="GO_Central"/>
</dbReference>
<dbReference type="GO" id="GO:0006511">
    <property type="term" value="P:ubiquitin-dependent protein catabolic process"/>
    <property type="evidence" value="ECO:0000318"/>
    <property type="project" value="GO_Central"/>
</dbReference>
<dbReference type="CDD" id="cd01491">
    <property type="entry name" value="Ube1_repeat1"/>
    <property type="match status" value="1"/>
</dbReference>
<dbReference type="CDD" id="cd01490">
    <property type="entry name" value="Ube1_repeat2"/>
    <property type="match status" value="1"/>
</dbReference>
<dbReference type="FunFam" id="1.10.10.2660:FF:000001">
    <property type="entry name" value="Ubiquitin-activating enzyme E1 1"/>
    <property type="match status" value="1"/>
</dbReference>
<dbReference type="FunFam" id="3.40.50.12550:FF:000001">
    <property type="entry name" value="Ubiquitin-activating enzyme E1 1"/>
    <property type="match status" value="1"/>
</dbReference>
<dbReference type="FunFam" id="3.40.50.720:FF:000015">
    <property type="entry name" value="Ubiquitin-activating enzyme E1 1"/>
    <property type="match status" value="1"/>
</dbReference>
<dbReference type="FunFam" id="3.10.290.60:FF:000002">
    <property type="entry name" value="Ubiquitin-like modifier-activating enzyme 1"/>
    <property type="match status" value="1"/>
</dbReference>
<dbReference type="FunFam" id="2.40.30.180:FF:000001">
    <property type="entry name" value="ubiquitin-like modifier-activating enzyme 1"/>
    <property type="match status" value="1"/>
</dbReference>
<dbReference type="FunFam" id="3.50.50.80:FF:000001">
    <property type="entry name" value="ubiquitin-like modifier-activating enzyme 1"/>
    <property type="match status" value="1"/>
</dbReference>
<dbReference type="Gene3D" id="3.40.50.720">
    <property type="entry name" value="NAD(P)-binding Rossmann-like Domain"/>
    <property type="match status" value="1"/>
</dbReference>
<dbReference type="Gene3D" id="2.40.30.180">
    <property type="entry name" value="Ubiquitin-activating enzyme E1, FCCH domain"/>
    <property type="match status" value="1"/>
</dbReference>
<dbReference type="Gene3D" id="3.50.50.80">
    <property type="entry name" value="Ubiquitin-activating enzyme E1, inactive adenylation domain, subdomain 1"/>
    <property type="match status" value="1"/>
</dbReference>
<dbReference type="Gene3D" id="3.40.50.12550">
    <property type="entry name" value="Ubiquitin-activating enzyme E1, inactive adenylation domain, subdomain 2"/>
    <property type="match status" value="1"/>
</dbReference>
<dbReference type="Gene3D" id="1.10.10.2660">
    <property type="entry name" value="Ubiquitin-activating enzyme E1, SCCH domain"/>
    <property type="match status" value="1"/>
</dbReference>
<dbReference type="Gene3D" id="3.10.290.60">
    <property type="entry name" value="Ubiquitin-activating enzyme E1, UFD domain"/>
    <property type="match status" value="1"/>
</dbReference>
<dbReference type="InterPro" id="IPR032420">
    <property type="entry name" value="E1_4HB"/>
</dbReference>
<dbReference type="InterPro" id="IPR032418">
    <property type="entry name" value="E1_FCCH"/>
</dbReference>
<dbReference type="InterPro" id="IPR042302">
    <property type="entry name" value="E1_FCCH_sf"/>
</dbReference>
<dbReference type="InterPro" id="IPR045886">
    <property type="entry name" value="ThiF/MoeB/HesA"/>
</dbReference>
<dbReference type="InterPro" id="IPR000594">
    <property type="entry name" value="ThiF_NAD_FAD-bd"/>
</dbReference>
<dbReference type="InterPro" id="IPR018965">
    <property type="entry name" value="Ub-activating_enz_E1_C"/>
</dbReference>
<dbReference type="InterPro" id="IPR042449">
    <property type="entry name" value="Ub-E1_IAD_1"/>
</dbReference>
<dbReference type="InterPro" id="IPR038252">
    <property type="entry name" value="UBA_E1_C_sf"/>
</dbReference>
<dbReference type="InterPro" id="IPR019572">
    <property type="entry name" value="UBA_E1_SCCH"/>
</dbReference>
<dbReference type="InterPro" id="IPR042063">
    <property type="entry name" value="Ubi_acti_E1_SCCH"/>
</dbReference>
<dbReference type="InterPro" id="IPR035985">
    <property type="entry name" value="Ubiquitin-activating_enz"/>
</dbReference>
<dbReference type="InterPro" id="IPR018075">
    <property type="entry name" value="UBQ-activ_enz_E1"/>
</dbReference>
<dbReference type="InterPro" id="IPR018074">
    <property type="entry name" value="UBQ-activ_enz_E1_CS"/>
</dbReference>
<dbReference type="InterPro" id="IPR033127">
    <property type="entry name" value="UBQ-activ_enz_E1_Cys_AS"/>
</dbReference>
<dbReference type="InterPro" id="IPR000011">
    <property type="entry name" value="UBQ/SUMO-activ_enz_E1-like"/>
</dbReference>
<dbReference type="NCBIfam" id="TIGR01408">
    <property type="entry name" value="Ube1"/>
    <property type="match status" value="1"/>
</dbReference>
<dbReference type="PANTHER" id="PTHR10953">
    <property type="entry name" value="UBIQUITIN-ACTIVATING ENZYME E1"/>
    <property type="match status" value="1"/>
</dbReference>
<dbReference type="PANTHER" id="PTHR10953:SF155">
    <property type="entry name" value="UBIQUITIN-LIKE MODIFIER-ACTIVATING ENZYME 1"/>
    <property type="match status" value="1"/>
</dbReference>
<dbReference type="Pfam" id="PF16191">
    <property type="entry name" value="E1_4HB"/>
    <property type="match status" value="1"/>
</dbReference>
<dbReference type="Pfam" id="PF16190">
    <property type="entry name" value="E1_FCCH"/>
    <property type="match status" value="1"/>
</dbReference>
<dbReference type="Pfam" id="PF09358">
    <property type="entry name" value="E1_UFD"/>
    <property type="match status" value="1"/>
</dbReference>
<dbReference type="Pfam" id="PF00899">
    <property type="entry name" value="ThiF"/>
    <property type="match status" value="2"/>
</dbReference>
<dbReference type="Pfam" id="PF10585">
    <property type="entry name" value="UBA_E1_SCCH"/>
    <property type="match status" value="1"/>
</dbReference>
<dbReference type="PRINTS" id="PR01849">
    <property type="entry name" value="UBIQUITINACT"/>
</dbReference>
<dbReference type="SMART" id="SM00985">
    <property type="entry name" value="UBA_e1_C"/>
    <property type="match status" value="1"/>
</dbReference>
<dbReference type="SUPFAM" id="SSF69572">
    <property type="entry name" value="Activating enzymes of the ubiquitin-like proteins"/>
    <property type="match status" value="2"/>
</dbReference>
<dbReference type="PROSITE" id="PS00536">
    <property type="entry name" value="UBIQUITIN_ACTIVAT_1"/>
    <property type="match status" value="1"/>
</dbReference>
<dbReference type="PROSITE" id="PS00865">
    <property type="entry name" value="UBIQUITIN_ACTIVAT_2"/>
    <property type="match status" value="1"/>
</dbReference>
<accession>Q5U300</accession>
<proteinExistence type="evidence at protein level"/>
<keyword id="KW-0007">Acetylation</keyword>
<keyword id="KW-0067">ATP-binding</keyword>
<keyword id="KW-0963">Cytoplasm</keyword>
<keyword id="KW-0436">Ligase</keyword>
<keyword id="KW-0496">Mitochondrion</keyword>
<keyword id="KW-0547">Nucleotide-binding</keyword>
<keyword id="KW-0539">Nucleus</keyword>
<keyword id="KW-0597">Phosphoprotein</keyword>
<keyword id="KW-1185">Reference proteome</keyword>
<keyword id="KW-0677">Repeat</keyword>
<keyword id="KW-0832">Ubl conjugation</keyword>
<keyword id="KW-0833">Ubl conjugation pathway</keyword>
<comment type="function">
    <text evidence="1">Catalyzes the first step in ubiquitin conjugation to mark cellular proteins for degradation through the ubiquitin-proteasome system. Activates ubiquitin by first adenylating its C-terminal glycine residue with ATP, and thereafter linking this residue to the side chain of a cysteine residue in E1, yielding a ubiquitin-E1 thioester and free AMP. Essential for the formation of radiation-induced foci, timely DNA repair and for response to replication stress. Promotes the recruitment of TP53BP1 and BRCA1 at DNA damage sites.</text>
</comment>
<comment type="catalytic activity">
    <reaction evidence="1">
        <text>ATP + ubiquitin + [E1 ubiquitin-activating enzyme]-L-cysteine = AMP + diphosphate + S-ubiquitinyl-[E1 ubiquitin-activating enzyme]-L-cysteine.</text>
        <dbReference type="EC" id="6.2.1.45"/>
    </reaction>
</comment>
<comment type="pathway">
    <text evidence="1">Protein modification; protein ubiquitination.</text>
</comment>
<comment type="subunit">
    <text evidence="3">Monomer. Interacts with GAN (via BTB domain) (By similarity).</text>
</comment>
<comment type="interaction">
    <interactant intactId="EBI-40204881">
        <id>Q5U300</id>
    </interactant>
    <interactant intactId="EBI-764342">
        <id>Q9H2C0</id>
        <label>GAN</label>
    </interactant>
    <organismsDiffer>true</organismsDiffer>
    <experiments>2</experiments>
</comment>
<comment type="subcellular location">
    <subcellularLocation>
        <location evidence="1">Cytoplasm</location>
    </subcellularLocation>
    <subcellularLocation>
        <location evidence="1">Mitochondrion</location>
    </subcellularLocation>
    <subcellularLocation>
        <location evidence="1">Nucleus</location>
    </subcellularLocation>
</comment>
<comment type="PTM">
    <text evidence="1">ISGylated.</text>
</comment>
<comment type="miscellaneous">
    <text evidence="2">There are two active sites within the E1 molecule, allowing it to accommodate two ubiquitin moieties at a time, with a new ubiquitin forming an adenylate intermediate as the previous one is transferred to the thiol site.</text>
</comment>
<comment type="similarity">
    <text evidence="4">Belongs to the ubiquitin-activating E1 family.</text>
</comment>
<sequence length="1058" mass="117788">MSSSPLSKKRRVSGPDPKPGSNCSSAQSVLSEVSSVPTNGMAKNGSEADIDESLYSRQLYVLGHEAMKMLQTSSVLVSGLRGLGVEIAKNIILGGVKAVTLHDQGTTQWADLSSQFYLREEDIGKNRAEVSQPRLAELNSYVPVTAYTGPLVEDFLSGFQVVVLTNSPLEEQLRVGEFCHSRGIKLVVADTRGLFGQLFCDFGEEMVLTDSNGEQPLSAMVSMVTKDNPGVVTCLDEARHGFETGDFVSFSEVQGMVQLNGCQPIEIKVLGPYTFSICDTSNFSDYIRGGIVSQVKVPKKISFKSLPASLAEPDFVMTDFAKYSRPAQLHIGFQALHQFCAQHNRPPRPRNEEDATELVTLAQAVNARSPPAVQQDNVDEDLIRKLAYVAAGDLAPINAFIGGLAAQEVMKACSGKFMPIMQWLYFDALECLPEDKEALTEDKCLPRQNRYDGQVAVFGSDLQEKLGKQKYFLVGAGAIGCELLKNFAMIGLGCGEGGEVVVTDMDTIEKSNLNRQFLFRPWDVTKLKSDTAAAAVRQMNPYIQVTSHQNRVGPDTERIYDDDFFQNLDGVANALDNVDARMYMDRRCVYYRKPLLESGTLGTKGNVQVVIPFLTESYSSSQDPPEKSIPICTLKNFPNAIEHTLQWARDEFEGLFKQPAENVNQYLTDSKFVERTLRLAGTQPLEVLEAVQRSLVLQRPQTWGDCVTWACHHWHTQYCNNIRQLLHNFPPDQLTSSGAPFWSGPKRCPHPLTFDVNNTLHLDYVMAAANLFAQTYGLTGSQDRAAVASLLQSVQVPEFTPKSGVKIHVSDQELQSANASVDDSRLEELKATLPSPDKLPGFKMYPIDFEKDDDSNFHMDFIVAASNLRAENYDISPADRHKSKLIAGKIIPAIATTTAAVVGLVCLELYKVVQGHQQLDSYKNGFLNLALPFFGFSEPLAAPRHQYYNQEWTLWDRFEVQGLQPNGEEMTLKQFLDYFKTEHKLEITMLSQGVSMLYSFFMPAAKLKERLDQPMTEIVSRVSKRKLGRHVRALVLELCCNDESGEDVEVPYVRYTIR</sequence>